<proteinExistence type="inferred from homology"/>
<comment type="function">
    <text evidence="1 2">Transfers N-acetylgalactosamine onto globotriaosylceramide. Plays a critical role in preimplantation stage embryonic development.</text>
</comment>
<comment type="catalytic activity">
    <reaction evidence="1">
        <text>a globoside Gb3Cer (d18:1(4E)) + UDP-N-acetyl-alpha-D-galactosamine = a globoside Gb4Cer (d18:1(4E)) + UDP + H(+)</text>
        <dbReference type="Rhea" id="RHEA:22252"/>
        <dbReference type="ChEBI" id="CHEBI:15378"/>
        <dbReference type="ChEBI" id="CHEBI:18259"/>
        <dbReference type="ChEBI" id="CHEBI:18313"/>
        <dbReference type="ChEBI" id="CHEBI:58223"/>
        <dbReference type="ChEBI" id="CHEBI:67138"/>
        <dbReference type="EC" id="2.4.1.79"/>
    </reaction>
    <physiologicalReaction direction="left-to-right" evidence="1">
        <dbReference type="Rhea" id="RHEA:22253"/>
    </physiologicalReaction>
</comment>
<comment type="cofactor">
    <cofactor evidence="1">
        <name>Mg(2+)</name>
        <dbReference type="ChEBI" id="CHEBI:18420"/>
    </cofactor>
</comment>
<comment type="pathway">
    <text>Protein modification; protein glycosylation.</text>
</comment>
<comment type="subcellular location">
    <subcellularLocation>
        <location evidence="1">Golgi apparatus membrane</location>
        <topology evidence="1">Single-pass type II membrane protein</topology>
    </subcellularLocation>
</comment>
<comment type="similarity">
    <text evidence="4">Belongs to the glycosyltransferase 31 family.</text>
</comment>
<feature type="chain" id="PRO_0000219155" description="UDP-GalNAc:beta-1,3-N-acetylgalactosaminyltransferase 1">
    <location>
        <begin position="1"/>
        <end position="331"/>
    </location>
</feature>
<feature type="topological domain" description="Cytoplasmic" evidence="3">
    <location>
        <begin position="1"/>
        <end position="20"/>
    </location>
</feature>
<feature type="transmembrane region" description="Helical; Signal-anchor for type II membrane protein" evidence="3">
    <location>
        <begin position="21"/>
        <end position="43"/>
    </location>
</feature>
<feature type="topological domain" description="Lumenal" evidence="3">
    <location>
        <begin position="44"/>
        <end position="331"/>
    </location>
</feature>
<feature type="glycosylation site" description="N-linked (GlcNAc...) asparagine" evidence="3">
    <location>
        <position position="72"/>
    </location>
</feature>
<feature type="glycosylation site" description="N-linked (GlcNAc...) asparagine" evidence="3">
    <location>
        <position position="154"/>
    </location>
</feature>
<feature type="glycosylation site" description="N-linked (GlcNAc...) asparagine" evidence="3">
    <location>
        <position position="198"/>
    </location>
</feature>
<feature type="glycosylation site" description="N-linked (GlcNAc...) asparagine" evidence="3">
    <location>
        <position position="212"/>
    </location>
</feature>
<feature type="glycosylation site" description="N-linked (GlcNAc...) asparagine" evidence="3">
    <location>
        <position position="326"/>
    </location>
</feature>
<dbReference type="EC" id="2.4.1.79" evidence="1"/>
<dbReference type="EMBL" id="AB039163">
    <property type="protein sequence ID" value="BAB68687.1"/>
    <property type="molecule type" value="Genomic_DNA"/>
</dbReference>
<dbReference type="SMR" id="Q793U7"/>
<dbReference type="GlyCosmos" id="Q793U7">
    <property type="glycosylation" value="5 sites, No reported glycans"/>
</dbReference>
<dbReference type="Ensembl" id="ENSMSIT00000036623.1">
    <property type="protein sequence ID" value="ENSMSIP00000029052.1"/>
    <property type="gene ID" value="ENSMSIG00000024414.1"/>
</dbReference>
<dbReference type="GeneTree" id="ENSGT00940000162252"/>
<dbReference type="UniPathway" id="UPA00378"/>
<dbReference type="Proteomes" id="UP000694415">
    <property type="component" value="Unplaced"/>
</dbReference>
<dbReference type="GO" id="GO:0000139">
    <property type="term" value="C:Golgi membrane"/>
    <property type="evidence" value="ECO:0007669"/>
    <property type="project" value="UniProtKB-SubCell"/>
</dbReference>
<dbReference type="GO" id="GO:0047273">
    <property type="term" value="F:galactosylgalactosylglucosylceramide beta-D-acetylgalactosaminyltransferase activity"/>
    <property type="evidence" value="ECO:0007669"/>
    <property type="project" value="UniProtKB-EC"/>
</dbReference>
<dbReference type="GO" id="GO:0008499">
    <property type="term" value="F:N-acetyl-beta-D-glucosaminide beta-(1,3)-galactosyltransferase activity"/>
    <property type="evidence" value="ECO:0007669"/>
    <property type="project" value="Ensembl"/>
</dbReference>
<dbReference type="GO" id="GO:0006629">
    <property type="term" value="P:lipid metabolic process"/>
    <property type="evidence" value="ECO:0007669"/>
    <property type="project" value="UniProtKB-KW"/>
</dbReference>
<dbReference type="GO" id="GO:0009312">
    <property type="term" value="P:oligosaccharide biosynthetic process"/>
    <property type="evidence" value="ECO:0007669"/>
    <property type="project" value="Ensembl"/>
</dbReference>
<dbReference type="GO" id="GO:0006493">
    <property type="term" value="P:protein O-linked glycosylation"/>
    <property type="evidence" value="ECO:0007669"/>
    <property type="project" value="TreeGrafter"/>
</dbReference>
<dbReference type="FunFam" id="3.90.550.50:FF:000001">
    <property type="entry name" value="Hexosyltransferase"/>
    <property type="match status" value="1"/>
</dbReference>
<dbReference type="Gene3D" id="3.90.550.50">
    <property type="match status" value="1"/>
</dbReference>
<dbReference type="InterPro" id="IPR002659">
    <property type="entry name" value="Glyco_trans_31"/>
</dbReference>
<dbReference type="PANTHER" id="PTHR11214">
    <property type="entry name" value="BETA-1,3-N-ACETYLGLUCOSAMINYLTRANSFERASE"/>
    <property type="match status" value="1"/>
</dbReference>
<dbReference type="PANTHER" id="PTHR11214:SF153">
    <property type="entry name" value="UDP-GALNAC:BETA-1,3-N-ACETYLGALACTOSAMINYLTRANSFERASE 1"/>
    <property type="match status" value="1"/>
</dbReference>
<dbReference type="Pfam" id="PF01762">
    <property type="entry name" value="Galactosyl_T"/>
    <property type="match status" value="1"/>
</dbReference>
<protein>
    <recommendedName>
        <fullName>UDP-GalNAc:beta-1,3-N-acetylgalactosaminyltransferase 1</fullName>
        <shortName>Beta-1,3-GalNAc-T1</shortName>
        <ecNumber evidence="1">2.4.1.79</ecNumber>
    </recommendedName>
    <alternativeName>
        <fullName>Beta-1,3-galactosyltransferase 3</fullName>
        <shortName>Beta-1,3-GalTase 3</shortName>
        <shortName>Beta3Gal-T3</shortName>
        <shortName>Beta3GalT3</shortName>
        <shortName>b3Gal-T3</shortName>
    </alternativeName>
    <alternativeName>
        <fullName>Beta-3-Gx-T3</fullName>
    </alternativeName>
    <alternativeName>
        <fullName>Galactosylgalactosylglucosylceramide beta-D-acetyl-galactosaminyltransferase</fullName>
    </alternativeName>
    <alternativeName>
        <fullName>Globoside synthase</fullName>
    </alternativeName>
    <alternativeName>
        <fullName>UDP-N-acetylgalactosamine:globotriaosylceramide beta-1,3-N-acetylgalactosaminyltransferase</fullName>
    </alternativeName>
</protein>
<keyword id="KW-0325">Glycoprotein</keyword>
<keyword id="KW-0328">Glycosyltransferase</keyword>
<keyword id="KW-0333">Golgi apparatus</keyword>
<keyword id="KW-0443">Lipid metabolism</keyword>
<keyword id="KW-0460">Magnesium</keyword>
<keyword id="KW-0472">Membrane</keyword>
<keyword id="KW-1185">Reference proteome</keyword>
<keyword id="KW-0735">Signal-anchor</keyword>
<keyword id="KW-0808">Transferase</keyword>
<keyword id="KW-0812">Transmembrane</keyword>
<keyword id="KW-1133">Transmembrane helix</keyword>
<gene>
    <name type="primary">B3galnt1</name>
    <name type="synonym">B3galt3</name>
    <name type="synonym">B3gt3</name>
</gene>
<name>B3GL1_MUSSI</name>
<accession>Q793U7</accession>
<reference key="1">
    <citation type="submission" date="2000-02" db="EMBL/GenBank/DDBJ databases">
        <title>Conspicuous differences among gene genealogies of 21 nuclear genes of five Mus musculus subspecies.</title>
        <authorList>
            <person name="Liu Y."/>
            <person name="Kitano T."/>
            <person name="Koide T."/>
            <person name="Shiroishi T."/>
            <person name="Moriwaki K."/>
            <person name="Saitou N."/>
        </authorList>
    </citation>
    <scope>NUCLEOTIDE SEQUENCE [GENOMIC DNA]</scope>
    <source>
        <strain>ZBN</strain>
    </source>
</reference>
<evidence type="ECO:0000250" key="1">
    <source>
        <dbReference type="UniProtKB" id="O75752"/>
    </source>
</evidence>
<evidence type="ECO:0000250" key="2">
    <source>
        <dbReference type="UniProtKB" id="Q920V1"/>
    </source>
</evidence>
<evidence type="ECO:0000255" key="3"/>
<evidence type="ECO:0000305" key="4"/>
<sequence>MAPAVLTALPNRMSLRSLKWSLLLLSLLSFLVIWYLSLPHYNVIERVNWMYFYEYEPIYRQDFRFTLREHSNCSHQNPFLVILVTSRPSDVKARQAIRVTWGEKKSWWGYEVLTFFLLGQQAEREDKTLALSLEDEHVLYGDIIRQDFLDTYNNLTLKTIMAFRWVMEFCPNAKYIMKTDTDVFINTGNLVKYLLNLNHSEKFFTGYPLIDNYSYRGFFHKNHISYQEYPFKVFPPYCSGLGYIMSGDLVPRVYEMMSHVKPIKFEDVYVGICLNLLKVDIHIPEDTNLFFLYRIHLDVCQLRRVIAAHGFSSKEIITFWQVMLRNTTCHY</sequence>
<organism>
    <name type="scientific">Mus spicilegus</name>
    <name type="common">Steppe mouse</name>
    <dbReference type="NCBI Taxonomy" id="10103"/>
    <lineage>
        <taxon>Eukaryota</taxon>
        <taxon>Metazoa</taxon>
        <taxon>Chordata</taxon>
        <taxon>Craniata</taxon>
        <taxon>Vertebrata</taxon>
        <taxon>Euteleostomi</taxon>
        <taxon>Mammalia</taxon>
        <taxon>Eutheria</taxon>
        <taxon>Euarchontoglires</taxon>
        <taxon>Glires</taxon>
        <taxon>Rodentia</taxon>
        <taxon>Myomorpha</taxon>
        <taxon>Muroidea</taxon>
        <taxon>Muridae</taxon>
        <taxon>Murinae</taxon>
        <taxon>Mus</taxon>
        <taxon>Mus</taxon>
    </lineage>
</organism>